<proteinExistence type="evidence at transcript level"/>
<dbReference type="EMBL" id="CR859394">
    <property type="protein sequence ID" value="CAH91567.1"/>
    <property type="molecule type" value="mRNA"/>
</dbReference>
<dbReference type="RefSeq" id="NP_001125920.1">
    <property type="nucleotide sequence ID" value="NM_001132448.1"/>
</dbReference>
<dbReference type="RefSeq" id="XP_009233344.1">
    <property type="nucleotide sequence ID" value="XM_009235069.3"/>
</dbReference>
<dbReference type="RefSeq" id="XP_009233346.1">
    <property type="nucleotide sequence ID" value="XM_009235071.3"/>
</dbReference>
<dbReference type="RefSeq" id="XP_054400015.1">
    <property type="nucleotide sequence ID" value="XM_054544040.2"/>
</dbReference>
<dbReference type="SMR" id="Q5R9J3"/>
<dbReference type="FunCoup" id="Q5R9J3">
    <property type="interactions" value="516"/>
</dbReference>
<dbReference type="STRING" id="9601.ENSPPYP00000023013"/>
<dbReference type="Ensembl" id="ENSPPYT00000023981.2">
    <property type="protein sequence ID" value="ENSPPYP00000023013.1"/>
    <property type="gene ID" value="ENSPPYG00000020558.2"/>
</dbReference>
<dbReference type="Ensembl" id="ENSPPYT00000062200.1">
    <property type="protein sequence ID" value="ENSPPYP00000030579.1"/>
    <property type="gene ID" value="ENSPPYG00000020558.2"/>
</dbReference>
<dbReference type="GeneID" id="100172854"/>
<dbReference type="KEGG" id="pon:100172854"/>
<dbReference type="CTD" id="51566"/>
<dbReference type="eggNOG" id="ENOG502TCDI">
    <property type="taxonomic scope" value="Eukaryota"/>
</dbReference>
<dbReference type="GeneTree" id="ENSGT00940000162753"/>
<dbReference type="HOGENOM" id="CLU_037187_0_0_1"/>
<dbReference type="InParanoid" id="Q5R9J3"/>
<dbReference type="OMA" id="DSKSIVW"/>
<dbReference type="OrthoDB" id="10017790at2759"/>
<dbReference type="TreeFam" id="TF335652"/>
<dbReference type="Proteomes" id="UP000001595">
    <property type="component" value="Chromosome X"/>
</dbReference>
<dbReference type="GO" id="GO:1904115">
    <property type="term" value="C:axon cytoplasm"/>
    <property type="evidence" value="ECO:0007669"/>
    <property type="project" value="GOC"/>
</dbReference>
<dbReference type="GO" id="GO:0005829">
    <property type="term" value="C:cytosol"/>
    <property type="evidence" value="ECO:0007669"/>
    <property type="project" value="Ensembl"/>
</dbReference>
<dbReference type="GO" id="GO:0005741">
    <property type="term" value="C:mitochondrial outer membrane"/>
    <property type="evidence" value="ECO:0007669"/>
    <property type="project" value="UniProtKB-SubCell"/>
</dbReference>
<dbReference type="GO" id="GO:0005634">
    <property type="term" value="C:nucleus"/>
    <property type="evidence" value="ECO:0007669"/>
    <property type="project" value="UniProtKB-SubCell"/>
</dbReference>
<dbReference type="GO" id="GO:0019896">
    <property type="term" value="P:axonal transport of mitochondrion"/>
    <property type="evidence" value="ECO:0007669"/>
    <property type="project" value="Ensembl"/>
</dbReference>
<dbReference type="GO" id="GO:0007005">
    <property type="term" value="P:mitochondrion organization"/>
    <property type="evidence" value="ECO:0007669"/>
    <property type="project" value="Ensembl"/>
</dbReference>
<dbReference type="GO" id="GO:0045944">
    <property type="term" value="P:positive regulation of transcription by RNA polymerase II"/>
    <property type="evidence" value="ECO:0007669"/>
    <property type="project" value="Ensembl"/>
</dbReference>
<dbReference type="GO" id="GO:0008104">
    <property type="term" value="P:protein localization"/>
    <property type="evidence" value="ECO:0007669"/>
    <property type="project" value="Ensembl"/>
</dbReference>
<dbReference type="FunFam" id="1.25.10.10:FF:000846">
    <property type="entry name" value="Armadillo repeat-containing X-linked protein 3"/>
    <property type="match status" value="1"/>
</dbReference>
<dbReference type="Gene3D" id="1.25.10.10">
    <property type="entry name" value="Leucine-rich Repeat Variant"/>
    <property type="match status" value="2"/>
</dbReference>
<dbReference type="InterPro" id="IPR011989">
    <property type="entry name" value="ARM-like"/>
</dbReference>
<dbReference type="InterPro" id="IPR006911">
    <property type="entry name" value="ARM-rpt_dom"/>
</dbReference>
<dbReference type="InterPro" id="IPR016024">
    <property type="entry name" value="ARM-type_fold"/>
</dbReference>
<dbReference type="InterPro" id="IPR000225">
    <property type="entry name" value="Armadillo"/>
</dbReference>
<dbReference type="InterPro" id="IPR051303">
    <property type="entry name" value="Armcx_regulator"/>
</dbReference>
<dbReference type="PANTHER" id="PTHR15712">
    <property type="entry name" value="ARMADILLO REPEAT CONTAINING PROTEIN"/>
    <property type="match status" value="1"/>
</dbReference>
<dbReference type="PANTHER" id="PTHR15712:SF8">
    <property type="entry name" value="ARMADILLO REPEAT-CONTAINING X-LINKED PROTEIN 3"/>
    <property type="match status" value="1"/>
</dbReference>
<dbReference type="Pfam" id="PF04826">
    <property type="entry name" value="Arm_2"/>
    <property type="match status" value="1"/>
</dbReference>
<dbReference type="SUPFAM" id="SSF48371">
    <property type="entry name" value="ARM repeat"/>
    <property type="match status" value="1"/>
</dbReference>
<dbReference type="PROSITE" id="PS50176">
    <property type="entry name" value="ARM_REPEAT"/>
    <property type="match status" value="1"/>
</dbReference>
<gene>
    <name type="primary">ARMCX3</name>
</gene>
<reference key="1">
    <citation type="submission" date="2004-11" db="EMBL/GenBank/DDBJ databases">
        <authorList>
            <consortium name="The German cDNA consortium"/>
        </authorList>
    </citation>
    <scope>NUCLEOTIDE SEQUENCE [LARGE SCALE MRNA]</scope>
    <source>
        <tissue>Brain cortex</tissue>
    </source>
</reference>
<feature type="chain" id="PRO_0000191367" description="Armadillo repeat-containing X-linked protein 3">
    <location>
        <begin position="1"/>
        <end position="379"/>
    </location>
</feature>
<feature type="topological domain" description="Mitochondrial intermembrane" evidence="1">
    <location>
        <begin position="1"/>
        <end position="6"/>
    </location>
</feature>
<feature type="transmembrane region" description="Helical; Signal-anchor" evidence="3">
    <location>
        <begin position="7"/>
        <end position="29"/>
    </location>
</feature>
<feature type="topological domain" description="Cytoplasmic" evidence="1">
    <location>
        <begin position="30"/>
        <end position="379"/>
    </location>
</feature>
<feature type="repeat" description="ARM 1" evidence="3">
    <location>
        <begin position="111"/>
        <end position="151"/>
    </location>
</feature>
<feature type="repeat" description="ARM 2" evidence="3">
    <location>
        <begin position="153"/>
        <end position="192"/>
    </location>
</feature>
<feature type="repeat" description="ARM 3" evidence="3">
    <location>
        <begin position="233"/>
        <end position="272"/>
    </location>
</feature>
<feature type="region of interest" description="Mitochondrion outer membrane (MOM)-targeting sequence" evidence="4">
    <location>
        <begin position="1"/>
        <end position="6"/>
    </location>
</feature>
<feature type="region of interest" description="Mitochondrion outer membrane (MOM)-targeting sequence" evidence="4">
    <location>
        <begin position="26"/>
        <end position="37"/>
    </location>
</feature>
<feature type="region of interest" description="Nuclear localization signal" evidence="1">
    <location>
        <begin position="89"/>
        <end position="98"/>
    </location>
</feature>
<feature type="modified residue" description="Phosphoserine" evidence="2">
    <location>
        <position position="61"/>
    </location>
</feature>
<feature type="modified residue" description="Phosphoserine" evidence="2">
    <location>
        <position position="67"/>
    </location>
</feature>
<feature type="modified residue" description="Phosphoserine" evidence="2">
    <location>
        <position position="72"/>
    </location>
</feature>
<feature type="modified residue" description="Phosphoserine" evidence="2">
    <location>
        <position position="110"/>
    </location>
</feature>
<sequence length="379" mass="42515">MGYARKVGWVTAGLVIGAGACYCIYRLTRGRKQNKEKMAEGGSGDVDDAGDCSGARYNDWSDDDDDSNESKSIVWYPPWARIGTEAGTRARARARARATRARRAVQKRASPNSDDTILSPQELQKVLCLVEMSEKPYILEAALIALGNNAAYAFNRDIIRDLGGLPIVAKILNTRDPIVKEKALIVLNNLSVNAENQRRLKVYMNQVCDDTITSRLNSSVQLAGLRLLTNMTVTNEYQHMLANSISDFFRLFSAGNEETKLQVLKLLLNLAENPAMTRELLRAQVPSSLGSLFNKKENKEVILKLLVIFENINDNFKWEENEPTQNQFGEGSLFFFLKEFQVCADKVLGIESHHDFLVKVKVGKFMAKLAEHMFPKSQE</sequence>
<keyword id="KW-0963">Cytoplasm</keyword>
<keyword id="KW-0472">Membrane</keyword>
<keyword id="KW-0496">Mitochondrion</keyword>
<keyword id="KW-1000">Mitochondrion outer membrane</keyword>
<keyword id="KW-0539">Nucleus</keyword>
<keyword id="KW-0597">Phosphoprotein</keyword>
<keyword id="KW-1185">Reference proteome</keyword>
<keyword id="KW-0677">Repeat</keyword>
<keyword id="KW-0735">Signal-anchor</keyword>
<keyword id="KW-0812">Transmembrane</keyword>
<keyword id="KW-1133">Transmembrane helix</keyword>
<comment type="function">
    <text evidence="1">Regulates mitochondrial aggregation and transport in axons in living neurons. May link mitochondria to the TRAK2-kinesin motor complex via its interaction with Miro and TRAK2. Mitochondrial distribution and dynamics is regulated through ARMCX3 protein degradation, which is promoted by PCK and negatively regulated by WNT1. Enhances the SOX10-mediated transactivation of the neuronal acetylcholine receptor subunit alpha-3 and beta-4 subunit gene promoters.</text>
</comment>
<comment type="subunit">
    <text evidence="1">Interacts (via ARM domain) with MIRO1, MIRO2 and TRAK2. The interaction with Miro is calcium-dependent. Interacts with SOX10.</text>
</comment>
<comment type="subcellular location">
    <subcellularLocation>
        <location evidence="1">Mitochondrion outer membrane</location>
        <topology evidence="3">Single-pass membrane protein</topology>
    </subcellularLocation>
    <subcellularLocation>
        <location evidence="1">Cytoplasm</location>
    </subcellularLocation>
    <subcellularLocation>
        <location evidence="1">Nucleus</location>
    </subcellularLocation>
</comment>
<comment type="similarity">
    <text evidence="4">Belongs to the eutherian X-chromosome-specific Armcx family.</text>
</comment>
<name>ARMX3_PONAB</name>
<organism>
    <name type="scientific">Pongo abelii</name>
    <name type="common">Sumatran orangutan</name>
    <name type="synonym">Pongo pygmaeus abelii</name>
    <dbReference type="NCBI Taxonomy" id="9601"/>
    <lineage>
        <taxon>Eukaryota</taxon>
        <taxon>Metazoa</taxon>
        <taxon>Chordata</taxon>
        <taxon>Craniata</taxon>
        <taxon>Vertebrata</taxon>
        <taxon>Euteleostomi</taxon>
        <taxon>Mammalia</taxon>
        <taxon>Eutheria</taxon>
        <taxon>Euarchontoglires</taxon>
        <taxon>Primates</taxon>
        <taxon>Haplorrhini</taxon>
        <taxon>Catarrhini</taxon>
        <taxon>Hominidae</taxon>
        <taxon>Pongo</taxon>
    </lineage>
</organism>
<evidence type="ECO:0000250" key="1">
    <source>
        <dbReference type="UniProtKB" id="Q8BHS6"/>
    </source>
</evidence>
<evidence type="ECO:0000250" key="2">
    <source>
        <dbReference type="UniProtKB" id="Q9UH62"/>
    </source>
</evidence>
<evidence type="ECO:0000255" key="3"/>
<evidence type="ECO:0000305" key="4"/>
<protein>
    <recommendedName>
        <fullName>Armadillo repeat-containing X-linked protein 3</fullName>
    </recommendedName>
</protein>
<accession>Q5R9J3</accession>